<comment type="function">
    <text evidence="2">Palmitoyltransferase that could catalyze the addition of palmitate onto various protein substrates. May have a palmitoyltransferase activity toward the beta-2 adrenergic receptor/ADRB2 and thereby regulate G protein-coupled receptor signaling. May play a role in cell differentiation and apoptosis.</text>
</comment>
<comment type="catalytic activity">
    <reaction evidence="2">
        <text>L-cysteinyl-[protein] + hexadecanoyl-CoA = S-hexadecanoyl-L-cysteinyl-[protein] + CoA</text>
        <dbReference type="Rhea" id="RHEA:36683"/>
        <dbReference type="Rhea" id="RHEA-COMP:10131"/>
        <dbReference type="Rhea" id="RHEA-COMP:11032"/>
        <dbReference type="ChEBI" id="CHEBI:29950"/>
        <dbReference type="ChEBI" id="CHEBI:57287"/>
        <dbReference type="ChEBI" id="CHEBI:57379"/>
        <dbReference type="ChEBI" id="CHEBI:74151"/>
        <dbReference type="EC" id="2.3.1.225"/>
    </reaction>
    <physiologicalReaction direction="left-to-right" evidence="2">
        <dbReference type="Rhea" id="RHEA:36684"/>
    </physiologicalReaction>
</comment>
<comment type="subcellular location">
    <subcellularLocation>
        <location evidence="2">Endoplasmic reticulum membrane</location>
        <topology evidence="3">Multi-pass membrane protein</topology>
    </subcellularLocation>
    <subcellularLocation>
        <location evidence="2">Golgi apparatus membrane</location>
        <topology evidence="3">Multi-pass membrane protein</topology>
    </subcellularLocation>
</comment>
<comment type="alternative products">
    <event type="alternative splicing"/>
    <isoform>
        <id>Q8BQQ1-1</id>
        <name>1</name>
        <sequence type="displayed"/>
    </isoform>
    <isoform>
        <id>Q8BQQ1-2</id>
        <name>2</name>
        <sequence type="described" ref="VSP_016272"/>
    </isoform>
</comment>
<comment type="domain">
    <text evidence="1">The DHHC domain is required for palmitoyltransferase activity.</text>
</comment>
<comment type="similarity">
    <text evidence="7">Belongs to the DHHC palmitoyltransferase family. ERF2/ZDHHC9 subfamily.</text>
</comment>
<comment type="sequence caution" evidence="7">
    <conflict type="frameshift">
        <sequence resource="EMBL-CDS" id="BAC38040"/>
    </conflict>
</comment>
<name>ZDH14_MOUSE</name>
<accession>Q8BQQ1</accession>
<accession>Q8BNR2</accession>
<accession>Q8CFN0</accession>
<reference key="1">
    <citation type="submission" date="2002-08" db="EMBL/GenBank/DDBJ databases">
        <authorList>
            <person name="Guo J.H."/>
            <person name="Chen L."/>
            <person name="Yu L."/>
        </authorList>
    </citation>
    <scope>NUCLEOTIDE SEQUENCE [LARGE SCALE MRNA] (ISOFORM 2)</scope>
    <source>
        <strain>BALB/cJ</strain>
        <tissue>Adipose tissue</tissue>
    </source>
</reference>
<reference key="2">
    <citation type="journal article" date="2005" name="Science">
        <title>The transcriptional landscape of the mammalian genome.</title>
        <authorList>
            <person name="Carninci P."/>
            <person name="Kasukawa T."/>
            <person name="Katayama S."/>
            <person name="Gough J."/>
            <person name="Frith M.C."/>
            <person name="Maeda N."/>
            <person name="Oyama R."/>
            <person name="Ravasi T."/>
            <person name="Lenhard B."/>
            <person name="Wells C."/>
            <person name="Kodzius R."/>
            <person name="Shimokawa K."/>
            <person name="Bajic V.B."/>
            <person name="Brenner S.E."/>
            <person name="Batalov S."/>
            <person name="Forrest A.R."/>
            <person name="Zavolan M."/>
            <person name="Davis M.J."/>
            <person name="Wilming L.G."/>
            <person name="Aidinis V."/>
            <person name="Allen J.E."/>
            <person name="Ambesi-Impiombato A."/>
            <person name="Apweiler R."/>
            <person name="Aturaliya R.N."/>
            <person name="Bailey T.L."/>
            <person name="Bansal M."/>
            <person name="Baxter L."/>
            <person name="Beisel K.W."/>
            <person name="Bersano T."/>
            <person name="Bono H."/>
            <person name="Chalk A.M."/>
            <person name="Chiu K.P."/>
            <person name="Choudhary V."/>
            <person name="Christoffels A."/>
            <person name="Clutterbuck D.R."/>
            <person name="Crowe M.L."/>
            <person name="Dalla E."/>
            <person name="Dalrymple B.P."/>
            <person name="de Bono B."/>
            <person name="Della Gatta G."/>
            <person name="di Bernardo D."/>
            <person name="Down T."/>
            <person name="Engstrom P."/>
            <person name="Fagiolini M."/>
            <person name="Faulkner G."/>
            <person name="Fletcher C.F."/>
            <person name="Fukushima T."/>
            <person name="Furuno M."/>
            <person name="Futaki S."/>
            <person name="Gariboldi M."/>
            <person name="Georgii-Hemming P."/>
            <person name="Gingeras T.R."/>
            <person name="Gojobori T."/>
            <person name="Green R.E."/>
            <person name="Gustincich S."/>
            <person name="Harbers M."/>
            <person name="Hayashi Y."/>
            <person name="Hensch T.K."/>
            <person name="Hirokawa N."/>
            <person name="Hill D."/>
            <person name="Huminiecki L."/>
            <person name="Iacono M."/>
            <person name="Ikeo K."/>
            <person name="Iwama A."/>
            <person name="Ishikawa T."/>
            <person name="Jakt M."/>
            <person name="Kanapin A."/>
            <person name="Katoh M."/>
            <person name="Kawasawa Y."/>
            <person name="Kelso J."/>
            <person name="Kitamura H."/>
            <person name="Kitano H."/>
            <person name="Kollias G."/>
            <person name="Krishnan S.P."/>
            <person name="Kruger A."/>
            <person name="Kummerfeld S.K."/>
            <person name="Kurochkin I.V."/>
            <person name="Lareau L.F."/>
            <person name="Lazarevic D."/>
            <person name="Lipovich L."/>
            <person name="Liu J."/>
            <person name="Liuni S."/>
            <person name="McWilliam S."/>
            <person name="Madan Babu M."/>
            <person name="Madera M."/>
            <person name="Marchionni L."/>
            <person name="Matsuda H."/>
            <person name="Matsuzawa S."/>
            <person name="Miki H."/>
            <person name="Mignone F."/>
            <person name="Miyake S."/>
            <person name="Morris K."/>
            <person name="Mottagui-Tabar S."/>
            <person name="Mulder N."/>
            <person name="Nakano N."/>
            <person name="Nakauchi H."/>
            <person name="Ng P."/>
            <person name="Nilsson R."/>
            <person name="Nishiguchi S."/>
            <person name="Nishikawa S."/>
            <person name="Nori F."/>
            <person name="Ohara O."/>
            <person name="Okazaki Y."/>
            <person name="Orlando V."/>
            <person name="Pang K.C."/>
            <person name="Pavan W.J."/>
            <person name="Pavesi G."/>
            <person name="Pesole G."/>
            <person name="Petrovsky N."/>
            <person name="Piazza S."/>
            <person name="Reed J."/>
            <person name="Reid J.F."/>
            <person name="Ring B.Z."/>
            <person name="Ringwald M."/>
            <person name="Rost B."/>
            <person name="Ruan Y."/>
            <person name="Salzberg S.L."/>
            <person name="Sandelin A."/>
            <person name="Schneider C."/>
            <person name="Schoenbach C."/>
            <person name="Sekiguchi K."/>
            <person name="Semple C.A."/>
            <person name="Seno S."/>
            <person name="Sessa L."/>
            <person name="Sheng Y."/>
            <person name="Shibata Y."/>
            <person name="Shimada H."/>
            <person name="Shimada K."/>
            <person name="Silva D."/>
            <person name="Sinclair B."/>
            <person name="Sperling S."/>
            <person name="Stupka E."/>
            <person name="Sugiura K."/>
            <person name="Sultana R."/>
            <person name="Takenaka Y."/>
            <person name="Taki K."/>
            <person name="Tammoja K."/>
            <person name="Tan S.L."/>
            <person name="Tang S."/>
            <person name="Taylor M.S."/>
            <person name="Tegner J."/>
            <person name="Teichmann S.A."/>
            <person name="Ueda H.R."/>
            <person name="van Nimwegen E."/>
            <person name="Verardo R."/>
            <person name="Wei C.L."/>
            <person name="Yagi K."/>
            <person name="Yamanishi H."/>
            <person name="Zabarovsky E."/>
            <person name="Zhu S."/>
            <person name="Zimmer A."/>
            <person name="Hide W."/>
            <person name="Bult C."/>
            <person name="Grimmond S.M."/>
            <person name="Teasdale R.D."/>
            <person name="Liu E.T."/>
            <person name="Brusic V."/>
            <person name="Quackenbush J."/>
            <person name="Wahlestedt C."/>
            <person name="Mattick J.S."/>
            <person name="Hume D.A."/>
            <person name="Kai C."/>
            <person name="Sasaki D."/>
            <person name="Tomaru Y."/>
            <person name="Fukuda S."/>
            <person name="Kanamori-Katayama M."/>
            <person name="Suzuki M."/>
            <person name="Aoki J."/>
            <person name="Arakawa T."/>
            <person name="Iida J."/>
            <person name="Imamura K."/>
            <person name="Itoh M."/>
            <person name="Kato T."/>
            <person name="Kawaji H."/>
            <person name="Kawagashira N."/>
            <person name="Kawashima T."/>
            <person name="Kojima M."/>
            <person name="Kondo S."/>
            <person name="Konno H."/>
            <person name="Nakano K."/>
            <person name="Ninomiya N."/>
            <person name="Nishio T."/>
            <person name="Okada M."/>
            <person name="Plessy C."/>
            <person name="Shibata K."/>
            <person name="Shiraki T."/>
            <person name="Suzuki S."/>
            <person name="Tagami M."/>
            <person name="Waki K."/>
            <person name="Watahiki A."/>
            <person name="Okamura-Oho Y."/>
            <person name="Suzuki H."/>
            <person name="Kawai J."/>
            <person name="Hayashizaki Y."/>
        </authorList>
    </citation>
    <scope>NUCLEOTIDE SEQUENCE [LARGE SCALE MRNA] (ISOFORM 1)</scope>
    <source>
        <strain>C57BL/6J</strain>
        <tissue>Brain cortex</tissue>
        <tissue>Corpora quadrigemina</tissue>
    </source>
</reference>
<reference key="3">
    <citation type="journal article" date="2004" name="Genome Res.">
        <title>The status, quality, and expansion of the NIH full-length cDNA project: the Mammalian Gene Collection (MGC).</title>
        <authorList>
            <consortium name="The MGC Project Team"/>
        </authorList>
    </citation>
    <scope>NUCLEOTIDE SEQUENCE [LARGE SCALE MRNA] (ISOFORM 1)</scope>
    <source>
        <strain>C57BL/6J</strain>
        <tissue>Brain</tissue>
    </source>
</reference>
<reference key="4">
    <citation type="journal article" date="2010" name="Cell">
        <title>A tissue-specific atlas of mouse protein phosphorylation and expression.</title>
        <authorList>
            <person name="Huttlin E.L."/>
            <person name="Jedrychowski M.P."/>
            <person name="Elias J.E."/>
            <person name="Goswami T."/>
            <person name="Rad R."/>
            <person name="Beausoleil S.A."/>
            <person name="Villen J."/>
            <person name="Haas W."/>
            <person name="Sowa M.E."/>
            <person name="Gygi S.P."/>
        </authorList>
    </citation>
    <scope>PHOSPHORYLATION [LARGE SCALE ANALYSIS] AT SER-456</scope>
    <scope>IDENTIFICATION BY MASS SPECTROMETRY [LARGE SCALE ANALYSIS]</scope>
    <source>
        <tissue>Brain</tissue>
    </source>
</reference>
<keyword id="KW-0012">Acyltransferase</keyword>
<keyword id="KW-0025">Alternative splicing</keyword>
<keyword id="KW-0256">Endoplasmic reticulum</keyword>
<keyword id="KW-0333">Golgi apparatus</keyword>
<keyword id="KW-0449">Lipoprotein</keyword>
<keyword id="KW-0472">Membrane</keyword>
<keyword id="KW-0564">Palmitate</keyword>
<keyword id="KW-0597">Phosphoprotein</keyword>
<keyword id="KW-1185">Reference proteome</keyword>
<keyword id="KW-0808">Transferase</keyword>
<keyword id="KW-0812">Transmembrane</keyword>
<keyword id="KW-1133">Transmembrane helix</keyword>
<evidence type="ECO:0000250" key="1">
    <source>
        <dbReference type="UniProtKB" id="Q8IUH5"/>
    </source>
</evidence>
<evidence type="ECO:0000250" key="2">
    <source>
        <dbReference type="UniProtKB" id="Q8IZN3"/>
    </source>
</evidence>
<evidence type="ECO:0000255" key="3"/>
<evidence type="ECO:0000255" key="4">
    <source>
        <dbReference type="PROSITE-ProRule" id="PRU00067"/>
    </source>
</evidence>
<evidence type="ECO:0000256" key="5">
    <source>
        <dbReference type="SAM" id="MobiDB-lite"/>
    </source>
</evidence>
<evidence type="ECO:0000303" key="6">
    <source ref="1"/>
</evidence>
<evidence type="ECO:0000305" key="7"/>
<evidence type="ECO:0000312" key="8">
    <source>
        <dbReference type="MGI" id="MGI:2653229"/>
    </source>
</evidence>
<evidence type="ECO:0007744" key="9">
    <source>
    </source>
</evidence>
<organism>
    <name type="scientific">Mus musculus</name>
    <name type="common">Mouse</name>
    <dbReference type="NCBI Taxonomy" id="10090"/>
    <lineage>
        <taxon>Eukaryota</taxon>
        <taxon>Metazoa</taxon>
        <taxon>Chordata</taxon>
        <taxon>Craniata</taxon>
        <taxon>Vertebrata</taxon>
        <taxon>Euteleostomi</taxon>
        <taxon>Mammalia</taxon>
        <taxon>Eutheria</taxon>
        <taxon>Euarchontoglires</taxon>
        <taxon>Glires</taxon>
        <taxon>Rodentia</taxon>
        <taxon>Myomorpha</taxon>
        <taxon>Muroidea</taxon>
        <taxon>Muridae</taxon>
        <taxon>Murinae</taxon>
        <taxon>Mus</taxon>
        <taxon>Mus</taxon>
    </lineage>
</organism>
<gene>
    <name evidence="8" type="primary">Zdhhc14</name>
</gene>
<sequence length="489" mass="53659">MPPGGGGPMKDCEYSQISTHSSSPMESPHKKKKIAARRKWEVFPGRNKFFCNGRIMMARQTGVFYLTLILILVTSGLFFAFDCRYLAEKITPAIPVVGGILFFFVMGTLLRTSFSDPGVLPRATPDEAADLERQIDIANGTSSGGYRPPPRTKEVVINGQTVKLKYCFTCKIFRPPRASHCSLCDNCVEQFDHHCPWVGNCVGKRNYRFFYMFILSLSFLTVFIFAFVITHVIHRSQQKGFLDALKDSPASVLEAVICFFSVWSIIGLSGFHTYLISSNQTTNEDIKGSWSNKRGKENYNPYSYGNIFTNCCVALCGPISPSLIDRRGYVQPDTPQPAAPSNGITMYGATQSQSDMCDQDQCIQSTKFVLQAAATPLLQSEPSLTSEELHMPGKPGLGTPCASLTLGQPTPPSSMPNLATEATLSDIMPLKDEHGGHQFLTPDEAPSPPRMLGAGSPLAHSRTMHMLGLASQDSLHEDSVRGLVKLSSV</sequence>
<proteinExistence type="evidence at protein level"/>
<dbReference type="EC" id="2.3.1.225" evidence="2"/>
<dbReference type="EMBL" id="AF542387">
    <property type="protein sequence ID" value="AAN47141.1"/>
    <property type="molecule type" value="mRNA"/>
</dbReference>
<dbReference type="EMBL" id="AK046719">
    <property type="protein sequence ID" value="BAC32845.1"/>
    <property type="molecule type" value="mRNA"/>
</dbReference>
<dbReference type="EMBL" id="AK080845">
    <property type="protein sequence ID" value="BAC38040.1"/>
    <property type="status" value="ALT_FRAME"/>
    <property type="molecule type" value="mRNA"/>
</dbReference>
<dbReference type="EMBL" id="BC059814">
    <property type="protein sequence ID" value="AAH59814.1"/>
    <property type="molecule type" value="mRNA"/>
</dbReference>
<dbReference type="CCDS" id="CCDS37422.1">
    <molecule id="Q8BQQ1-1"/>
</dbReference>
<dbReference type="RefSeq" id="NP_666185.3">
    <molecule id="Q8BQQ1-1"/>
    <property type="nucleotide sequence ID" value="NM_146073.3"/>
</dbReference>
<dbReference type="SMR" id="Q8BQQ1"/>
<dbReference type="BioGRID" id="230271">
    <property type="interactions" value="1"/>
</dbReference>
<dbReference type="FunCoup" id="Q8BQQ1">
    <property type="interactions" value="1356"/>
</dbReference>
<dbReference type="STRING" id="10090.ENSMUSP00000086589"/>
<dbReference type="iPTMnet" id="Q8BQQ1"/>
<dbReference type="PhosphoSitePlus" id="Q8BQQ1"/>
<dbReference type="jPOST" id="Q8BQQ1"/>
<dbReference type="PaxDb" id="10090-ENSMUSP00000086589"/>
<dbReference type="PeptideAtlas" id="Q8BQQ1"/>
<dbReference type="ProteomicsDB" id="275134">
    <molecule id="Q8BQQ1-1"/>
</dbReference>
<dbReference type="ProteomicsDB" id="275135">
    <molecule id="Q8BQQ1-2"/>
</dbReference>
<dbReference type="Antibodypedia" id="33428">
    <property type="antibodies" value="50 antibodies from 18 providers"/>
</dbReference>
<dbReference type="DNASU" id="224454"/>
<dbReference type="Ensembl" id="ENSMUST00000089185.6">
    <molecule id="Q8BQQ1-1"/>
    <property type="protein sequence ID" value="ENSMUSP00000086589.5"/>
    <property type="gene ID" value="ENSMUSG00000034265.9"/>
</dbReference>
<dbReference type="GeneID" id="224454"/>
<dbReference type="KEGG" id="mmu:224454"/>
<dbReference type="UCSC" id="uc008aff.1">
    <molecule id="Q8BQQ1-1"/>
    <property type="organism name" value="mouse"/>
</dbReference>
<dbReference type="AGR" id="MGI:2653229"/>
<dbReference type="CTD" id="79683"/>
<dbReference type="MGI" id="MGI:2653229">
    <property type="gene designation" value="Zdhhc14"/>
</dbReference>
<dbReference type="VEuPathDB" id="HostDB:ENSMUSG00000034265"/>
<dbReference type="eggNOG" id="KOG1311">
    <property type="taxonomic scope" value="Eukaryota"/>
</dbReference>
<dbReference type="GeneTree" id="ENSGT00940000156483"/>
<dbReference type="HOGENOM" id="CLU_018741_0_0_1"/>
<dbReference type="InParanoid" id="Q8BQQ1"/>
<dbReference type="OMA" id="TSDEMHL"/>
<dbReference type="OrthoDB" id="4096362at2759"/>
<dbReference type="PhylomeDB" id="Q8BQQ1"/>
<dbReference type="TreeFam" id="TF312923"/>
<dbReference type="BioGRID-ORCS" id="224454">
    <property type="hits" value="1 hit in 78 CRISPR screens"/>
</dbReference>
<dbReference type="ChiTaRS" id="Zdhhc14">
    <property type="organism name" value="mouse"/>
</dbReference>
<dbReference type="PRO" id="PR:Q8BQQ1"/>
<dbReference type="Proteomes" id="UP000000589">
    <property type="component" value="Chromosome 17"/>
</dbReference>
<dbReference type="RNAct" id="Q8BQQ1">
    <property type="molecule type" value="protein"/>
</dbReference>
<dbReference type="Bgee" id="ENSMUSG00000034265">
    <property type="expression patterns" value="Expressed in motor neuron and 243 other cell types or tissues"/>
</dbReference>
<dbReference type="GO" id="GO:0005789">
    <property type="term" value="C:endoplasmic reticulum membrane"/>
    <property type="evidence" value="ECO:0007669"/>
    <property type="project" value="UniProtKB-SubCell"/>
</dbReference>
<dbReference type="GO" id="GO:0000139">
    <property type="term" value="C:Golgi membrane"/>
    <property type="evidence" value="ECO:0007669"/>
    <property type="project" value="UniProtKB-SubCell"/>
</dbReference>
<dbReference type="GO" id="GO:0019706">
    <property type="term" value="F:protein-cysteine S-palmitoyltransferase activity"/>
    <property type="evidence" value="ECO:0007669"/>
    <property type="project" value="UniProtKB-EC"/>
</dbReference>
<dbReference type="GO" id="GO:0018230">
    <property type="term" value="P:peptidyl-L-cysteine S-palmitoylation"/>
    <property type="evidence" value="ECO:0000250"/>
    <property type="project" value="UniProtKB"/>
</dbReference>
<dbReference type="InterPro" id="IPR001594">
    <property type="entry name" value="Palmitoyltrfase_DHHC"/>
</dbReference>
<dbReference type="InterPro" id="IPR039859">
    <property type="entry name" value="PFA4/ZDH16/20/ERF2-like"/>
</dbReference>
<dbReference type="PANTHER" id="PTHR22883:SF28">
    <property type="entry name" value="PALMITOYLTRANSFERASE ZDHHC14"/>
    <property type="match status" value="1"/>
</dbReference>
<dbReference type="PANTHER" id="PTHR22883">
    <property type="entry name" value="ZINC FINGER DHHC DOMAIN CONTAINING PROTEIN"/>
    <property type="match status" value="1"/>
</dbReference>
<dbReference type="Pfam" id="PF01529">
    <property type="entry name" value="DHHC"/>
    <property type="match status" value="1"/>
</dbReference>
<dbReference type="PROSITE" id="PS50216">
    <property type="entry name" value="DHHC"/>
    <property type="match status" value="1"/>
</dbReference>
<feature type="chain" id="PRO_0000212892" description="Palmitoyltransferase ZDHHC14">
    <location>
        <begin position="1"/>
        <end position="489"/>
    </location>
</feature>
<feature type="topological domain" description="Cytoplasmic" evidence="7">
    <location>
        <begin position="1"/>
        <end position="60"/>
    </location>
</feature>
<feature type="transmembrane region" description="Helical" evidence="3">
    <location>
        <begin position="61"/>
        <end position="81"/>
    </location>
</feature>
<feature type="topological domain" description="Lumenal" evidence="7">
    <location>
        <begin position="82"/>
        <end position="89"/>
    </location>
</feature>
<feature type="transmembrane region" description="Helical" evidence="3">
    <location>
        <begin position="90"/>
        <end position="110"/>
    </location>
</feature>
<feature type="topological domain" description="Cytoplasmic" evidence="7">
    <location>
        <begin position="111"/>
        <end position="208"/>
    </location>
</feature>
<feature type="transmembrane region" description="Helical" evidence="3">
    <location>
        <begin position="209"/>
        <end position="229"/>
    </location>
</feature>
<feature type="topological domain" description="Lumenal" evidence="7">
    <location>
        <begin position="230"/>
        <end position="255"/>
    </location>
</feature>
<feature type="transmembrane region" description="Helical" evidence="3">
    <location>
        <begin position="256"/>
        <end position="276"/>
    </location>
</feature>
<feature type="topological domain" description="Cytoplasmic" evidence="7">
    <location>
        <begin position="277"/>
        <end position="489"/>
    </location>
</feature>
<feature type="domain" description="DHHC" evidence="4">
    <location>
        <begin position="165"/>
        <end position="215"/>
    </location>
</feature>
<feature type="region of interest" description="Disordered" evidence="5">
    <location>
        <begin position="434"/>
        <end position="454"/>
    </location>
</feature>
<feature type="active site" description="S-palmitoyl cysteine intermediate" evidence="4">
    <location>
        <position position="195"/>
    </location>
</feature>
<feature type="modified residue" description="Phosphoserine" evidence="9">
    <location>
        <position position="456"/>
    </location>
</feature>
<feature type="splice variant" id="VSP_016272" description="In isoform 2." evidence="6">
    <location>
        <begin position="1"/>
        <end position="105"/>
    </location>
</feature>
<feature type="sequence conflict" description="In Ref. 1; AAN47141." evidence="7" ref="1">
    <original>Y</original>
    <variation>C</variation>
    <location>
        <position position="274"/>
    </location>
</feature>
<protein>
    <recommendedName>
        <fullName evidence="7">Palmitoyltransferase ZDHHC14</fullName>
        <ecNumber evidence="2">2.3.1.225</ecNumber>
    </recommendedName>
    <alternativeName>
        <fullName evidence="2">DHHC domain-containing cysteine-rich protein 14</fullName>
        <shortName evidence="2">DHHC-14</shortName>
    </alternativeName>
    <alternativeName>
        <fullName evidence="6">NEW1 domain-containing protein</fullName>
        <shortName evidence="6">NEW1CP</shortName>
    </alternativeName>
    <alternativeName>
        <fullName evidence="8">Zinc finger DHHC domain-containing protein 14</fullName>
    </alternativeName>
</protein>